<name>PHY_EUBRA</name>
<dbReference type="EC" id="3.7.1.4" evidence="2"/>
<dbReference type="EMBL" id="AF548616">
    <property type="protein sequence ID" value="AAQ12341.1"/>
    <property type="molecule type" value="Genomic_DNA"/>
</dbReference>
<dbReference type="STRING" id="39490.ERS852448_03037"/>
<dbReference type="KEGG" id="ag:AAQ12341"/>
<dbReference type="BRENDA" id="3.7.1.4">
    <property type="organism ID" value="17131"/>
</dbReference>
<dbReference type="GO" id="GO:0005737">
    <property type="term" value="C:cytoplasm"/>
    <property type="evidence" value="ECO:0000314"/>
    <property type="project" value="UniProtKB"/>
</dbReference>
<dbReference type="GO" id="GO:0046872">
    <property type="term" value="F:metal ion binding"/>
    <property type="evidence" value="ECO:0007669"/>
    <property type="project" value="UniProtKB-KW"/>
</dbReference>
<dbReference type="GO" id="GO:0050180">
    <property type="term" value="F:phloretin hydrolase activity"/>
    <property type="evidence" value="ECO:0000314"/>
    <property type="project" value="UniProtKB"/>
</dbReference>
<dbReference type="GO" id="GO:0042803">
    <property type="term" value="F:protein homodimerization activity"/>
    <property type="evidence" value="ECO:0000314"/>
    <property type="project" value="UniProtKB"/>
</dbReference>
<dbReference type="GO" id="GO:0046275">
    <property type="term" value="P:flavonoid catabolic process"/>
    <property type="evidence" value="ECO:0000314"/>
    <property type="project" value="UniProtKB"/>
</dbReference>
<dbReference type="InterPro" id="IPR041526">
    <property type="entry name" value="DAPG_hydrolase"/>
</dbReference>
<dbReference type="Pfam" id="PF18089">
    <property type="entry name" value="DAPG_hydrolase"/>
    <property type="match status" value="1"/>
</dbReference>
<gene>
    <name type="primary">phy</name>
</gene>
<accession>Q715L4</accession>
<organism>
    <name type="scientific">Eubacterium ramulus</name>
    <dbReference type="NCBI Taxonomy" id="39490"/>
    <lineage>
        <taxon>Bacteria</taxon>
        <taxon>Bacillati</taxon>
        <taxon>Bacillota</taxon>
        <taxon>Clostridia</taxon>
        <taxon>Eubacteriales</taxon>
        <taxon>Eubacteriaceae</taxon>
        <taxon>Eubacterium</taxon>
    </lineage>
</organism>
<reference key="1">
    <citation type="journal article" date="2004" name="Appl. Environ. Microbiol.">
        <title>Cloning and expression of a phloretin hydrolase gene from Eubacterium ramulus and characterization of the recombinant enzyme.</title>
        <authorList>
            <person name="Schoefer L."/>
            <person name="Braune A."/>
            <person name="Blaut M."/>
        </authorList>
    </citation>
    <scope>NUCLEOTIDE SEQUENCE [GENOMIC DNA]</scope>
    <scope>FUNCTION</scope>
    <scope>CATALYTIC ACTIVITY</scope>
    <scope>SUBCELLULAR LOCATION</scope>
    <scope>SUBUNIT</scope>
    <scope>BIOPHYSICOCHEMICAL PROPERTIES</scope>
</reference>
<reference key="2">
    <citation type="journal article" date="2014" name="PLoS ONE">
        <title>Finding sequences for over 270 orphan enzymes.</title>
        <authorList>
            <person name="Shearer A.G."/>
            <person name="Altman T."/>
            <person name="Rhee C.D."/>
        </authorList>
    </citation>
    <scope>IDENTIFICATION</scope>
</reference>
<evidence type="ECO:0000250" key="1">
    <source>
        <dbReference type="UniProtKB" id="Q4K423"/>
    </source>
</evidence>
<evidence type="ECO:0000269" key="2">
    <source>
    </source>
</evidence>
<evidence type="ECO:0000303" key="3">
    <source>
    </source>
</evidence>
<evidence type="ECO:0000305" key="4"/>
<evidence type="ECO:0000305" key="5">
    <source>
    </source>
</evidence>
<proteinExistence type="evidence at protein level"/>
<comment type="function">
    <text evidence="2">Catalyzes the hydrolytic C-C cleavage of phloretin to phloroglucinol and 3-(4-hydroxyphenyl)propionic acid during flavonoid degradation. Also hydrolyzes other C-acylated phenols.</text>
</comment>
<comment type="catalytic activity">
    <reaction evidence="2">
        <text>phloretin + H2O = phloretate + 1,3,5-trihydroxybenzene + H(+)</text>
        <dbReference type="Rhea" id="RHEA:23396"/>
        <dbReference type="ChEBI" id="CHEBI:15377"/>
        <dbReference type="ChEBI" id="CHEBI:15378"/>
        <dbReference type="ChEBI" id="CHEBI:16204"/>
        <dbReference type="ChEBI" id="CHEBI:16331"/>
        <dbReference type="ChEBI" id="CHEBI:17276"/>
        <dbReference type="EC" id="3.7.1.4"/>
    </reaction>
</comment>
<comment type="cofactor">
    <cofactor evidence="1">
        <name>Zn(2+)</name>
        <dbReference type="ChEBI" id="CHEBI:29105"/>
    </cofactor>
</comment>
<comment type="biophysicochemical properties">
    <kinetics>
        <KM evidence="2">13 uM for phloretin</KM>
        <text evidence="2">kcat is 10 sec(-1) for phloretin.</text>
    </kinetics>
    <phDependence>
        <text evidence="2">Optimum pH is 7.0.</text>
    </phDependence>
    <temperatureDependence>
        <text evidence="2">Optimum temperature is 37 degrees Celsius.</text>
    </temperatureDependence>
</comment>
<comment type="subunit">
    <text evidence="2">Homodimer.</text>
</comment>
<comment type="subcellular location">
    <subcellularLocation>
        <location evidence="5">Cytoplasm</location>
    </subcellularLocation>
</comment>
<comment type="similarity">
    <text evidence="4">Belongs to the DAPG/phloretin hydrolase family.</text>
</comment>
<feature type="chain" id="PRO_0000430447" description="Phloretin hydrolase">
    <location>
        <begin position="1"/>
        <end position="274"/>
    </location>
</feature>
<feature type="binding site" evidence="1">
    <location>
        <position position="123"/>
    </location>
    <ligand>
        <name>Zn(2+)</name>
        <dbReference type="ChEBI" id="CHEBI:29105"/>
    </ligand>
</feature>
<feature type="binding site" evidence="1">
    <location>
        <position position="154"/>
    </location>
    <ligand>
        <name>Zn(2+)</name>
        <dbReference type="ChEBI" id="CHEBI:29105"/>
    </ligand>
</feature>
<feature type="binding site" evidence="1">
    <location>
        <position position="251"/>
    </location>
    <ligand>
        <name>Zn(2+)</name>
        <dbReference type="ChEBI" id="CHEBI:29105"/>
    </ligand>
</feature>
<feature type="binding site" evidence="1">
    <location>
        <position position="255"/>
    </location>
    <ligand>
        <name>Zn(2+)</name>
        <dbReference type="ChEBI" id="CHEBI:29105"/>
    </ligand>
</feature>
<protein>
    <recommendedName>
        <fullName evidence="3">Phloretin hydrolase</fullName>
        <ecNumber evidence="2">3.7.1.4</ecNumber>
    </recommendedName>
</protein>
<sequence length="274" mass="30923">MEEDFNMSTPGVKVGVXEEEKKLSYYKYYEQDLAPVPAEKIAILQGGPIAPEKCIPFDERNKFLKGEDDEYANIGFGVAADGTALVCNTTYMPGVTGEMLDWWFPWHSVGSDLRYKIWDPEDHYFARAYPASYVVDPNVPMNQKTWGVDHYIMEDVGPGPEFLKLCFKRPADFGYDESIIGTEKCESLVCAIGESSCAAAMTHKWHPYKDGVLFESRFWIGYRIDEEGNIVKAIPEGVSIPPFVPQGLFAHNIKEFTNLAAILPTLYAEEKDTF</sequence>
<keyword id="KW-0963">Cytoplasm</keyword>
<keyword id="KW-0378">Hydrolase</keyword>
<keyword id="KW-0479">Metal-binding</keyword>
<keyword id="KW-0862">Zinc</keyword>